<dbReference type="EMBL" id="AM285321">
    <property type="protein sequence ID" value="CAK99832.1"/>
    <property type="molecule type" value="Genomic_DNA"/>
</dbReference>
<dbReference type="RefSeq" id="WP_277945295.1">
    <property type="nucleotide sequence ID" value="NZ_CP096807.1"/>
</dbReference>
<dbReference type="SMR" id="Q14KZ8"/>
<dbReference type="STRING" id="2133.SCITRI_001839"/>
<dbReference type="GO" id="GO:0022625">
    <property type="term" value="C:cytosolic large ribosomal subunit"/>
    <property type="evidence" value="ECO:0007669"/>
    <property type="project" value="TreeGrafter"/>
</dbReference>
<dbReference type="GO" id="GO:0003729">
    <property type="term" value="F:mRNA binding"/>
    <property type="evidence" value="ECO:0007669"/>
    <property type="project" value="TreeGrafter"/>
</dbReference>
<dbReference type="GO" id="GO:0003735">
    <property type="term" value="F:structural constituent of ribosome"/>
    <property type="evidence" value="ECO:0007669"/>
    <property type="project" value="InterPro"/>
</dbReference>
<dbReference type="GO" id="GO:0017148">
    <property type="term" value="P:negative regulation of translation"/>
    <property type="evidence" value="ECO:0007669"/>
    <property type="project" value="TreeGrafter"/>
</dbReference>
<dbReference type="GO" id="GO:0006412">
    <property type="term" value="P:translation"/>
    <property type="evidence" value="ECO:0007669"/>
    <property type="project" value="UniProtKB-UniRule"/>
</dbReference>
<dbReference type="CDD" id="cd00392">
    <property type="entry name" value="Ribosomal_L13"/>
    <property type="match status" value="1"/>
</dbReference>
<dbReference type="FunFam" id="3.90.1180.10:FF:000001">
    <property type="entry name" value="50S ribosomal protein L13"/>
    <property type="match status" value="1"/>
</dbReference>
<dbReference type="Gene3D" id="3.90.1180.10">
    <property type="entry name" value="Ribosomal protein L13"/>
    <property type="match status" value="1"/>
</dbReference>
<dbReference type="HAMAP" id="MF_01366">
    <property type="entry name" value="Ribosomal_uL13"/>
    <property type="match status" value="1"/>
</dbReference>
<dbReference type="InterPro" id="IPR005822">
    <property type="entry name" value="Ribosomal_uL13"/>
</dbReference>
<dbReference type="InterPro" id="IPR005823">
    <property type="entry name" value="Ribosomal_uL13_bac-type"/>
</dbReference>
<dbReference type="InterPro" id="IPR036899">
    <property type="entry name" value="Ribosomal_uL13_sf"/>
</dbReference>
<dbReference type="NCBIfam" id="TIGR01066">
    <property type="entry name" value="rplM_bact"/>
    <property type="match status" value="1"/>
</dbReference>
<dbReference type="PANTHER" id="PTHR11545:SF2">
    <property type="entry name" value="LARGE RIBOSOMAL SUBUNIT PROTEIN UL13M"/>
    <property type="match status" value="1"/>
</dbReference>
<dbReference type="PANTHER" id="PTHR11545">
    <property type="entry name" value="RIBOSOMAL PROTEIN L13"/>
    <property type="match status" value="1"/>
</dbReference>
<dbReference type="Pfam" id="PF00572">
    <property type="entry name" value="Ribosomal_L13"/>
    <property type="match status" value="1"/>
</dbReference>
<dbReference type="PIRSF" id="PIRSF002181">
    <property type="entry name" value="Ribosomal_L13"/>
    <property type="match status" value="1"/>
</dbReference>
<dbReference type="SUPFAM" id="SSF52161">
    <property type="entry name" value="Ribosomal protein L13"/>
    <property type="match status" value="1"/>
</dbReference>
<protein>
    <recommendedName>
        <fullName evidence="1">Large ribosomal subunit protein uL13</fullName>
    </recommendedName>
    <alternativeName>
        <fullName evidence="2">50S ribosomal protein L13</fullName>
    </alternativeName>
</protein>
<accession>Q14KZ8</accession>
<gene>
    <name evidence="1" type="primary">rplM</name>
    <name type="ORF">SPICI20_074</name>
</gene>
<evidence type="ECO:0000255" key="1">
    <source>
        <dbReference type="HAMAP-Rule" id="MF_01366"/>
    </source>
</evidence>
<evidence type="ECO:0000305" key="2"/>
<sequence>MRQTTILNSTKVEKKWYVIDAQGLVLGRLASKVAMILRGKNKPSYTPHVDCGDNVIILNADKINLSGNKLKGKMYYHHSQHPGGLKRTTAKNMLVKKPIYPVEHAIKGMLPKNKLGSKLFRNLFVYAGNEHPHEAQQPIKLELTNK</sequence>
<proteinExistence type="inferred from homology"/>
<feature type="chain" id="PRO_0000261803" description="Large ribosomal subunit protein uL13">
    <location>
        <begin position="1"/>
        <end position="146"/>
    </location>
</feature>
<keyword id="KW-0687">Ribonucleoprotein</keyword>
<keyword id="KW-0689">Ribosomal protein</keyword>
<comment type="function">
    <text evidence="1">This protein is one of the early assembly proteins of the 50S ribosomal subunit, although it is not seen to bind rRNA by itself. It is important during the early stages of 50S assembly.</text>
</comment>
<comment type="subunit">
    <text evidence="1">Part of the 50S ribosomal subunit.</text>
</comment>
<comment type="similarity">
    <text evidence="1">Belongs to the universal ribosomal protein uL13 family.</text>
</comment>
<reference key="1">
    <citation type="submission" date="2006-06" db="EMBL/GenBank/DDBJ databases">
        <title>The partial chromosome sequence of Spiroplasma citri GII3-3X.</title>
        <authorList>
            <person name="Carle P."/>
            <person name="Saillard C."/>
            <person name="Blanchard A."/>
            <person name="Carrere N."/>
            <person name="Carrere S."/>
            <person name="Duret S."/>
            <person name="Eveillard S."/>
            <person name="Gaurivaud P."/>
            <person name="Gourgues G."/>
            <person name="Gouzy J."/>
            <person name="Henry A."/>
            <person name="Salar P."/>
            <person name="Laigret F."/>
            <person name="Bove J.M."/>
            <person name="Renaudin J."/>
            <person name="Foissac X."/>
        </authorList>
    </citation>
    <scope>NUCLEOTIDE SEQUENCE [GENOMIC DNA]</scope>
    <source>
        <strain>GII-3-3X</strain>
    </source>
</reference>
<organism>
    <name type="scientific">Spiroplasma citri</name>
    <dbReference type="NCBI Taxonomy" id="2133"/>
    <lineage>
        <taxon>Bacteria</taxon>
        <taxon>Bacillati</taxon>
        <taxon>Mycoplasmatota</taxon>
        <taxon>Mollicutes</taxon>
        <taxon>Entomoplasmatales</taxon>
        <taxon>Spiroplasmataceae</taxon>
        <taxon>Spiroplasma</taxon>
    </lineage>
</organism>
<name>RL13_SPICI</name>